<accession>Q3IHS1</accession>
<comment type="catalytic activity">
    <reaction evidence="1">
        <text>(S)-4-amino-5-oxopentanoate = 5-aminolevulinate</text>
        <dbReference type="Rhea" id="RHEA:14265"/>
        <dbReference type="ChEBI" id="CHEBI:57501"/>
        <dbReference type="ChEBI" id="CHEBI:356416"/>
        <dbReference type="EC" id="5.4.3.8"/>
    </reaction>
</comment>
<comment type="cofactor">
    <cofactor evidence="1">
        <name>pyridoxal 5'-phosphate</name>
        <dbReference type="ChEBI" id="CHEBI:597326"/>
    </cofactor>
</comment>
<comment type="pathway">
    <text evidence="1">Porphyrin-containing compound metabolism; protoporphyrin-IX biosynthesis; 5-aminolevulinate from L-glutamyl-tRNA(Glu): step 2/2.</text>
</comment>
<comment type="subunit">
    <text evidence="1">Homodimer.</text>
</comment>
<comment type="subcellular location">
    <subcellularLocation>
        <location evidence="1">Cytoplasm</location>
    </subcellularLocation>
</comment>
<comment type="similarity">
    <text evidence="1">Belongs to the class-III pyridoxal-phosphate-dependent aminotransferase family. HemL subfamily.</text>
</comment>
<feature type="chain" id="PRO_0000243602" description="Glutamate-1-semialdehyde 2,1-aminomutase">
    <location>
        <begin position="1"/>
        <end position="426"/>
    </location>
</feature>
<feature type="modified residue" description="N6-(pyridoxal phosphate)lysine" evidence="1">
    <location>
        <position position="265"/>
    </location>
</feature>
<reference key="1">
    <citation type="journal article" date="2005" name="Genome Res.">
        <title>Coping with cold: the genome of the versatile marine Antarctica bacterium Pseudoalteromonas haloplanktis TAC125.</title>
        <authorList>
            <person name="Medigue C."/>
            <person name="Krin E."/>
            <person name="Pascal G."/>
            <person name="Barbe V."/>
            <person name="Bernsel A."/>
            <person name="Bertin P.N."/>
            <person name="Cheung F."/>
            <person name="Cruveiller S."/>
            <person name="D'Amico S."/>
            <person name="Duilio A."/>
            <person name="Fang G."/>
            <person name="Feller G."/>
            <person name="Ho C."/>
            <person name="Mangenot S."/>
            <person name="Marino G."/>
            <person name="Nilsson J."/>
            <person name="Parrilli E."/>
            <person name="Rocha E.P.C."/>
            <person name="Rouy Z."/>
            <person name="Sekowska A."/>
            <person name="Tutino M.L."/>
            <person name="Vallenet D."/>
            <person name="von Heijne G."/>
            <person name="Danchin A."/>
        </authorList>
    </citation>
    <scope>NUCLEOTIDE SEQUENCE [LARGE SCALE GENOMIC DNA]</scope>
    <source>
        <strain>TAC 125</strain>
    </source>
</reference>
<evidence type="ECO:0000255" key="1">
    <source>
        <dbReference type="HAMAP-Rule" id="MF_00375"/>
    </source>
</evidence>
<proteinExistence type="inferred from homology"/>
<organism>
    <name type="scientific">Pseudoalteromonas translucida (strain TAC 125)</name>
    <dbReference type="NCBI Taxonomy" id="326442"/>
    <lineage>
        <taxon>Bacteria</taxon>
        <taxon>Pseudomonadati</taxon>
        <taxon>Pseudomonadota</taxon>
        <taxon>Gammaproteobacteria</taxon>
        <taxon>Alteromonadales</taxon>
        <taxon>Pseudoalteromonadaceae</taxon>
        <taxon>Pseudoalteromonas</taxon>
    </lineage>
</organism>
<gene>
    <name evidence="1" type="primary">hemL</name>
    <name type="ordered locus">PSHAa2255</name>
</gene>
<dbReference type="EC" id="5.4.3.8" evidence="1"/>
<dbReference type="EMBL" id="CR954246">
    <property type="protein sequence ID" value="CAI87311.1"/>
    <property type="molecule type" value="Genomic_DNA"/>
</dbReference>
<dbReference type="SMR" id="Q3IHS1"/>
<dbReference type="STRING" id="326442.PSHAa2255"/>
<dbReference type="KEGG" id="pha:PSHAa2255"/>
<dbReference type="PATRIC" id="fig|326442.8.peg.2176"/>
<dbReference type="eggNOG" id="COG0001">
    <property type="taxonomic scope" value="Bacteria"/>
</dbReference>
<dbReference type="HOGENOM" id="CLU_016922_1_5_6"/>
<dbReference type="BioCyc" id="PHAL326442:PSHA_RS11125-MONOMER"/>
<dbReference type="UniPathway" id="UPA00251">
    <property type="reaction ID" value="UER00317"/>
</dbReference>
<dbReference type="Proteomes" id="UP000006843">
    <property type="component" value="Chromosome I"/>
</dbReference>
<dbReference type="GO" id="GO:0005737">
    <property type="term" value="C:cytoplasm"/>
    <property type="evidence" value="ECO:0007669"/>
    <property type="project" value="UniProtKB-SubCell"/>
</dbReference>
<dbReference type="GO" id="GO:0042286">
    <property type="term" value="F:glutamate-1-semialdehyde 2,1-aminomutase activity"/>
    <property type="evidence" value="ECO:0007669"/>
    <property type="project" value="UniProtKB-UniRule"/>
</dbReference>
<dbReference type="GO" id="GO:0030170">
    <property type="term" value="F:pyridoxal phosphate binding"/>
    <property type="evidence" value="ECO:0007669"/>
    <property type="project" value="InterPro"/>
</dbReference>
<dbReference type="GO" id="GO:0008483">
    <property type="term" value="F:transaminase activity"/>
    <property type="evidence" value="ECO:0007669"/>
    <property type="project" value="InterPro"/>
</dbReference>
<dbReference type="GO" id="GO:0006782">
    <property type="term" value="P:protoporphyrinogen IX biosynthetic process"/>
    <property type="evidence" value="ECO:0007669"/>
    <property type="project" value="UniProtKB-UniRule"/>
</dbReference>
<dbReference type="CDD" id="cd00610">
    <property type="entry name" value="OAT_like"/>
    <property type="match status" value="1"/>
</dbReference>
<dbReference type="FunFam" id="3.40.640.10:FF:000021">
    <property type="entry name" value="Glutamate-1-semialdehyde 2,1-aminomutase"/>
    <property type="match status" value="1"/>
</dbReference>
<dbReference type="Gene3D" id="3.90.1150.10">
    <property type="entry name" value="Aspartate Aminotransferase, domain 1"/>
    <property type="match status" value="1"/>
</dbReference>
<dbReference type="Gene3D" id="3.40.640.10">
    <property type="entry name" value="Type I PLP-dependent aspartate aminotransferase-like (Major domain)"/>
    <property type="match status" value="1"/>
</dbReference>
<dbReference type="HAMAP" id="MF_00375">
    <property type="entry name" value="HemL_aminotrans_3"/>
    <property type="match status" value="1"/>
</dbReference>
<dbReference type="InterPro" id="IPR004639">
    <property type="entry name" value="4pyrrol_synth_GluAld_NH2Trfase"/>
</dbReference>
<dbReference type="InterPro" id="IPR005814">
    <property type="entry name" value="Aminotrans_3"/>
</dbReference>
<dbReference type="InterPro" id="IPR049704">
    <property type="entry name" value="Aminotrans_3_PPA_site"/>
</dbReference>
<dbReference type="InterPro" id="IPR015424">
    <property type="entry name" value="PyrdxlP-dep_Trfase"/>
</dbReference>
<dbReference type="InterPro" id="IPR015421">
    <property type="entry name" value="PyrdxlP-dep_Trfase_major"/>
</dbReference>
<dbReference type="InterPro" id="IPR015422">
    <property type="entry name" value="PyrdxlP-dep_Trfase_small"/>
</dbReference>
<dbReference type="NCBIfam" id="TIGR00713">
    <property type="entry name" value="hemL"/>
    <property type="match status" value="1"/>
</dbReference>
<dbReference type="NCBIfam" id="NF000818">
    <property type="entry name" value="PRK00062.1"/>
    <property type="match status" value="1"/>
</dbReference>
<dbReference type="PANTHER" id="PTHR43713">
    <property type="entry name" value="GLUTAMATE-1-SEMIALDEHYDE 2,1-AMINOMUTASE"/>
    <property type="match status" value="1"/>
</dbReference>
<dbReference type="PANTHER" id="PTHR43713:SF3">
    <property type="entry name" value="GLUTAMATE-1-SEMIALDEHYDE 2,1-AMINOMUTASE 1, CHLOROPLASTIC-RELATED"/>
    <property type="match status" value="1"/>
</dbReference>
<dbReference type="Pfam" id="PF00202">
    <property type="entry name" value="Aminotran_3"/>
    <property type="match status" value="1"/>
</dbReference>
<dbReference type="SUPFAM" id="SSF53383">
    <property type="entry name" value="PLP-dependent transferases"/>
    <property type="match status" value="1"/>
</dbReference>
<dbReference type="PROSITE" id="PS00600">
    <property type="entry name" value="AA_TRANSFER_CLASS_3"/>
    <property type="match status" value="1"/>
</dbReference>
<keyword id="KW-0963">Cytoplasm</keyword>
<keyword id="KW-0413">Isomerase</keyword>
<keyword id="KW-0627">Porphyrin biosynthesis</keyword>
<keyword id="KW-0663">Pyridoxal phosphate</keyword>
<keyword id="KW-1185">Reference proteome</keyword>
<protein>
    <recommendedName>
        <fullName evidence="1">Glutamate-1-semialdehyde 2,1-aminomutase</fullName>
        <shortName evidence="1">GSA</shortName>
        <ecNumber evidence="1">5.4.3.8</ecNumber>
    </recommendedName>
    <alternativeName>
        <fullName evidence="1">Glutamate-1-semialdehyde aminotransferase</fullName>
        <shortName evidence="1">GSA-AT</shortName>
    </alternativeName>
</protein>
<sequence>MTISQDLFARAQASIPGGVNSPVRAFNGVGGTPLFITKAEGAFTFDADGNRYIDYVGSWGPMIMGHNHPAIKQAVHDAVENGLSYGAPTEAEILMAEKVKELVPSIEKVRMVSSGTEATMSAIRLARGFTGRDKILKFEGCYHGHADSLLVKAGSGALTMGVPNSPGIPEDFAKHTLTVSFNNLDEVKAIFAKYADEIACIIVEPVAGNMNCIPPVPGFLEGLRDVCDEYKSVLIFDEVMTGFRVALGGAQAYYNIKPDLTCLGKVIGGGMPVGAFGGKTEIMDYIAPVGPVYQAGTLSGNPIAMAAGLKSLELLSEPGLHAKLEATSKAICEGFEAGAKKAGIALTTNYAGGMYGFFFTDAEKVTTYKQATECDLERFKRFFHLMLEEGVYLAPSAFEAGFVCAAHNEQEIKDTIAAAERAFAKL</sequence>
<name>GSA_PSET1</name>